<dbReference type="EC" id="2.1.3.15" evidence="1"/>
<dbReference type="EMBL" id="BX571856">
    <property type="protein sequence ID" value="CAG40769.1"/>
    <property type="molecule type" value="Genomic_DNA"/>
</dbReference>
<dbReference type="RefSeq" id="WP_000883646.1">
    <property type="nucleotide sequence ID" value="NC_002952.2"/>
</dbReference>
<dbReference type="PDB" id="2F9I">
    <property type="method" value="X-ray"/>
    <property type="resolution" value="1.98 A"/>
    <property type="chains" value="A=1-314"/>
</dbReference>
<dbReference type="PDBsum" id="2F9I"/>
<dbReference type="SMR" id="Q6GG07"/>
<dbReference type="KEGG" id="sar:SAR1778"/>
<dbReference type="HOGENOM" id="CLU_015486_0_2_9"/>
<dbReference type="UniPathway" id="UPA00655">
    <property type="reaction ID" value="UER00711"/>
</dbReference>
<dbReference type="Proteomes" id="UP000000596">
    <property type="component" value="Chromosome"/>
</dbReference>
<dbReference type="GO" id="GO:0009317">
    <property type="term" value="C:acetyl-CoA carboxylase complex"/>
    <property type="evidence" value="ECO:0007669"/>
    <property type="project" value="InterPro"/>
</dbReference>
<dbReference type="GO" id="GO:0003989">
    <property type="term" value="F:acetyl-CoA carboxylase activity"/>
    <property type="evidence" value="ECO:0007669"/>
    <property type="project" value="InterPro"/>
</dbReference>
<dbReference type="GO" id="GO:0005524">
    <property type="term" value="F:ATP binding"/>
    <property type="evidence" value="ECO:0007669"/>
    <property type="project" value="UniProtKB-KW"/>
</dbReference>
<dbReference type="GO" id="GO:0016743">
    <property type="term" value="F:carboxyl- or carbamoyltransferase activity"/>
    <property type="evidence" value="ECO:0007669"/>
    <property type="project" value="UniProtKB-UniRule"/>
</dbReference>
<dbReference type="GO" id="GO:0006633">
    <property type="term" value="P:fatty acid biosynthetic process"/>
    <property type="evidence" value="ECO:0007669"/>
    <property type="project" value="UniProtKB-KW"/>
</dbReference>
<dbReference type="GO" id="GO:2001295">
    <property type="term" value="P:malonyl-CoA biosynthetic process"/>
    <property type="evidence" value="ECO:0007669"/>
    <property type="project" value="UniProtKB-UniRule"/>
</dbReference>
<dbReference type="Gene3D" id="3.90.226.10">
    <property type="entry name" value="2-enoyl-CoA Hydratase, Chain A, domain 1"/>
    <property type="match status" value="1"/>
</dbReference>
<dbReference type="HAMAP" id="MF_00823">
    <property type="entry name" value="AcetylCoA_CT_alpha"/>
    <property type="match status" value="1"/>
</dbReference>
<dbReference type="InterPro" id="IPR001095">
    <property type="entry name" value="Acetyl_CoA_COase_a_su"/>
</dbReference>
<dbReference type="InterPro" id="IPR029045">
    <property type="entry name" value="ClpP/crotonase-like_dom_sf"/>
</dbReference>
<dbReference type="InterPro" id="IPR011763">
    <property type="entry name" value="COA_CT_C"/>
</dbReference>
<dbReference type="NCBIfam" id="TIGR00513">
    <property type="entry name" value="accA"/>
    <property type="match status" value="1"/>
</dbReference>
<dbReference type="NCBIfam" id="NF041504">
    <property type="entry name" value="AccA_sub"/>
    <property type="match status" value="1"/>
</dbReference>
<dbReference type="NCBIfam" id="NF004344">
    <property type="entry name" value="PRK05724.1"/>
    <property type="match status" value="1"/>
</dbReference>
<dbReference type="PANTHER" id="PTHR42853">
    <property type="entry name" value="ACETYL-COENZYME A CARBOXYLASE CARBOXYL TRANSFERASE SUBUNIT ALPHA"/>
    <property type="match status" value="1"/>
</dbReference>
<dbReference type="PANTHER" id="PTHR42853:SF3">
    <property type="entry name" value="ACETYL-COENZYME A CARBOXYLASE CARBOXYL TRANSFERASE SUBUNIT ALPHA, CHLOROPLASTIC"/>
    <property type="match status" value="1"/>
</dbReference>
<dbReference type="Pfam" id="PF03255">
    <property type="entry name" value="ACCA"/>
    <property type="match status" value="1"/>
</dbReference>
<dbReference type="PRINTS" id="PR01069">
    <property type="entry name" value="ACCCTRFRASEA"/>
</dbReference>
<dbReference type="SUPFAM" id="SSF52096">
    <property type="entry name" value="ClpP/crotonase"/>
    <property type="match status" value="1"/>
</dbReference>
<dbReference type="PROSITE" id="PS50989">
    <property type="entry name" value="COA_CT_CTER"/>
    <property type="match status" value="1"/>
</dbReference>
<sequence length="314" mass="35128">MLDFEKPLFEIRNKIESLKESQDKNDVDLQEEIDMLEASLERETKKIYTNLKPWDRVQIARLQERPTTLDYIPYIFDSFMELHGDRNFRDDPAMIGGIGFLNGRAVTVIGQQRGKDTKDNIYRNFGMAHPEGYRKALRLMKQAEKFNRPIFTFIDTKGAYPGKAAEERGQSESIATNLIEMASLKVPVIAIVIGEGGSGGALGIGIANKVLMLENSTYSVISPEGAAALLWKDSNLAKIAAETMKITAHDIKQLGIIDDVISEPLGGAHKDIEQQALAIKSAFVEQLDSLESLSRDEIANDRFEKFRNIGSYIE</sequence>
<feature type="chain" id="PRO_0000223827" description="Acetyl-coenzyme A carboxylase carboxyl transferase subunit alpha">
    <location>
        <begin position="1"/>
        <end position="314"/>
    </location>
</feature>
<feature type="domain" description="CoA carboxyltransferase C-terminal" evidence="2">
    <location>
        <begin position="32"/>
        <end position="289"/>
    </location>
</feature>
<proteinExistence type="evidence at protein level"/>
<gene>
    <name evidence="1" type="primary">accA</name>
    <name type="ordered locus">SAR1778</name>
</gene>
<organism>
    <name type="scientific">Staphylococcus aureus (strain MRSA252)</name>
    <dbReference type="NCBI Taxonomy" id="282458"/>
    <lineage>
        <taxon>Bacteria</taxon>
        <taxon>Bacillati</taxon>
        <taxon>Bacillota</taxon>
        <taxon>Bacilli</taxon>
        <taxon>Bacillales</taxon>
        <taxon>Staphylococcaceae</taxon>
        <taxon>Staphylococcus</taxon>
    </lineage>
</organism>
<name>ACCA_STAAR</name>
<comment type="function">
    <text evidence="1">Component of the acetyl coenzyme A carboxylase (ACC) complex. First, biotin carboxylase catalyzes the carboxylation of biotin on its carrier protein (BCCP) and then the CO(2) group is transferred by the carboxyltransferase to acetyl-CoA to form malonyl-CoA.</text>
</comment>
<comment type="catalytic activity">
    <reaction evidence="1">
        <text>N(6)-carboxybiotinyl-L-lysyl-[protein] + acetyl-CoA = N(6)-biotinyl-L-lysyl-[protein] + malonyl-CoA</text>
        <dbReference type="Rhea" id="RHEA:54728"/>
        <dbReference type="Rhea" id="RHEA-COMP:10505"/>
        <dbReference type="Rhea" id="RHEA-COMP:10506"/>
        <dbReference type="ChEBI" id="CHEBI:57288"/>
        <dbReference type="ChEBI" id="CHEBI:57384"/>
        <dbReference type="ChEBI" id="CHEBI:83144"/>
        <dbReference type="ChEBI" id="CHEBI:83145"/>
        <dbReference type="EC" id="2.1.3.15"/>
    </reaction>
</comment>
<comment type="pathway">
    <text evidence="1">Lipid metabolism; malonyl-CoA biosynthesis; malonyl-CoA from acetyl-CoA: step 1/1.</text>
</comment>
<comment type="subunit">
    <text evidence="1">Acetyl-CoA carboxylase is a heterohexamer composed of biotin carboxyl carrier protein (AccB), biotin carboxylase (AccC) and two subunits each of ACCase subunit alpha (AccA) and ACCase subunit beta (AccD).</text>
</comment>
<comment type="subcellular location">
    <subcellularLocation>
        <location evidence="1">Cytoplasm</location>
    </subcellularLocation>
</comment>
<comment type="similarity">
    <text evidence="1">Belongs to the AccA family.</text>
</comment>
<accession>Q6GG07</accession>
<evidence type="ECO:0000255" key="1">
    <source>
        <dbReference type="HAMAP-Rule" id="MF_00823"/>
    </source>
</evidence>
<evidence type="ECO:0000255" key="2">
    <source>
        <dbReference type="PROSITE-ProRule" id="PRU01137"/>
    </source>
</evidence>
<reference key="1">
    <citation type="journal article" date="2004" name="Proc. Natl. Acad. Sci. U.S.A.">
        <title>Complete genomes of two clinical Staphylococcus aureus strains: evidence for the rapid evolution of virulence and drug resistance.</title>
        <authorList>
            <person name="Holden M.T.G."/>
            <person name="Feil E.J."/>
            <person name="Lindsay J.A."/>
            <person name="Peacock S.J."/>
            <person name="Day N.P.J."/>
            <person name="Enright M.C."/>
            <person name="Foster T.J."/>
            <person name="Moore C.E."/>
            <person name="Hurst L."/>
            <person name="Atkin R."/>
            <person name="Barron A."/>
            <person name="Bason N."/>
            <person name="Bentley S.D."/>
            <person name="Chillingworth C."/>
            <person name="Chillingworth T."/>
            <person name="Churcher C."/>
            <person name="Clark L."/>
            <person name="Corton C."/>
            <person name="Cronin A."/>
            <person name="Doggett J."/>
            <person name="Dowd L."/>
            <person name="Feltwell T."/>
            <person name="Hance Z."/>
            <person name="Harris B."/>
            <person name="Hauser H."/>
            <person name="Holroyd S."/>
            <person name="Jagels K."/>
            <person name="James K.D."/>
            <person name="Lennard N."/>
            <person name="Line A."/>
            <person name="Mayes R."/>
            <person name="Moule S."/>
            <person name="Mungall K."/>
            <person name="Ormond D."/>
            <person name="Quail M.A."/>
            <person name="Rabbinowitsch E."/>
            <person name="Rutherford K.M."/>
            <person name="Sanders M."/>
            <person name="Sharp S."/>
            <person name="Simmonds M."/>
            <person name="Stevens K."/>
            <person name="Whitehead S."/>
            <person name="Barrell B.G."/>
            <person name="Spratt B.G."/>
            <person name="Parkhill J."/>
        </authorList>
    </citation>
    <scope>NUCLEOTIDE SEQUENCE [LARGE SCALE GENOMIC DNA]</scope>
    <source>
        <strain>MRSA252</strain>
    </source>
</reference>
<keyword id="KW-0002">3D-structure</keyword>
<keyword id="KW-0067">ATP-binding</keyword>
<keyword id="KW-0963">Cytoplasm</keyword>
<keyword id="KW-0275">Fatty acid biosynthesis</keyword>
<keyword id="KW-0276">Fatty acid metabolism</keyword>
<keyword id="KW-0444">Lipid biosynthesis</keyword>
<keyword id="KW-0443">Lipid metabolism</keyword>
<keyword id="KW-0547">Nucleotide-binding</keyword>
<keyword id="KW-0808">Transferase</keyword>
<protein>
    <recommendedName>
        <fullName evidence="1">Acetyl-coenzyme A carboxylase carboxyl transferase subunit alpha</fullName>
        <shortName evidence="1">ACCase subunit alpha</shortName>
        <shortName evidence="1">Acetyl-CoA carboxylase carboxyltransferase subunit alpha</shortName>
        <ecNumber evidence="1">2.1.3.15</ecNumber>
    </recommendedName>
</protein>